<evidence type="ECO:0000255" key="1">
    <source>
        <dbReference type="HAMAP-Rule" id="MF_01538"/>
    </source>
</evidence>
<name>Y1114_STAES</name>
<proteinExistence type="inferred from homology"/>
<accession>Q8CSK7</accession>
<organism>
    <name type="scientific">Staphylococcus epidermidis (strain ATCC 12228 / FDA PCI 1200)</name>
    <dbReference type="NCBI Taxonomy" id="176280"/>
    <lineage>
        <taxon>Bacteria</taxon>
        <taxon>Bacillati</taxon>
        <taxon>Bacillota</taxon>
        <taxon>Bacilli</taxon>
        <taxon>Bacillales</taxon>
        <taxon>Staphylococcaceae</taxon>
        <taxon>Staphylococcus</taxon>
    </lineage>
</organism>
<reference key="1">
    <citation type="journal article" date="2003" name="Mol. Microbiol.">
        <title>Genome-based analysis of virulence genes in a non-biofilm-forming Staphylococcus epidermidis strain (ATCC 12228).</title>
        <authorList>
            <person name="Zhang Y.-Q."/>
            <person name="Ren S.-X."/>
            <person name="Li H.-L."/>
            <person name="Wang Y.-X."/>
            <person name="Fu G."/>
            <person name="Yang J."/>
            <person name="Qin Z.-Q."/>
            <person name="Miao Y.-G."/>
            <person name="Wang W.-Y."/>
            <person name="Chen R.-S."/>
            <person name="Shen Y."/>
            <person name="Chen Z."/>
            <person name="Yuan Z.-H."/>
            <person name="Zhao G.-P."/>
            <person name="Qu D."/>
            <person name="Danchin A."/>
            <person name="Wen Y.-M."/>
        </authorList>
    </citation>
    <scope>NUCLEOTIDE SEQUENCE [LARGE SCALE GENOMIC DNA]</scope>
    <source>
        <strain>ATCC 12228 / FDA PCI 1200</strain>
    </source>
</reference>
<feature type="chain" id="PRO_0000164288" description="UPF0346 protein SE_1114">
    <location>
        <begin position="1"/>
        <end position="74"/>
    </location>
</feature>
<dbReference type="EMBL" id="AE015929">
    <property type="protein sequence ID" value="AAO04711.1"/>
    <property type="molecule type" value="Genomic_DNA"/>
</dbReference>
<dbReference type="RefSeq" id="NP_764669.1">
    <property type="nucleotide sequence ID" value="NC_004461.1"/>
</dbReference>
<dbReference type="RefSeq" id="WP_001831241.1">
    <property type="nucleotide sequence ID" value="NZ_WBME01000002.1"/>
</dbReference>
<dbReference type="SMR" id="Q8CSK7"/>
<dbReference type="KEGG" id="sep:SE_1114"/>
<dbReference type="PATRIC" id="fig|176280.10.peg.1087"/>
<dbReference type="eggNOG" id="COG4479">
    <property type="taxonomic scope" value="Bacteria"/>
</dbReference>
<dbReference type="HOGENOM" id="CLU_177534_1_0_9"/>
<dbReference type="OrthoDB" id="2242851at2"/>
<dbReference type="Proteomes" id="UP000001411">
    <property type="component" value="Chromosome"/>
</dbReference>
<dbReference type="Gene3D" id="1.10.150.260">
    <property type="entry name" value="YozE SAM-like"/>
    <property type="match status" value="1"/>
</dbReference>
<dbReference type="HAMAP" id="MF_01538">
    <property type="entry name" value="UPF0346"/>
    <property type="match status" value="1"/>
</dbReference>
<dbReference type="InterPro" id="IPR010673">
    <property type="entry name" value="UPF0346"/>
</dbReference>
<dbReference type="InterPro" id="IPR023089">
    <property type="entry name" value="YozE_SAM-like"/>
</dbReference>
<dbReference type="InterPro" id="IPR036806">
    <property type="entry name" value="YozE_SAM-like_sf"/>
</dbReference>
<dbReference type="NCBIfam" id="NF010193">
    <property type="entry name" value="PRK13672.1"/>
    <property type="match status" value="1"/>
</dbReference>
<dbReference type="Pfam" id="PF06855">
    <property type="entry name" value="YozE_SAM_like"/>
    <property type="match status" value="1"/>
</dbReference>
<dbReference type="PIRSF" id="PIRSF037262">
    <property type="entry name" value="UCP037262"/>
    <property type="match status" value="1"/>
</dbReference>
<dbReference type="SUPFAM" id="SSF140652">
    <property type="entry name" value="YozE-like"/>
    <property type="match status" value="1"/>
</dbReference>
<protein>
    <recommendedName>
        <fullName evidence="1">UPF0346 protein SE_1114</fullName>
    </recommendedName>
</protein>
<comment type="similarity">
    <text evidence="1">Belongs to the UPF0346 family.</text>
</comment>
<sequence>MVKNYSFYQFIMTVRGRKDDKGVFAEQIFEDLAFPKHEDDFNTLSEYIETHSEFTLPMSVFDDLYDDYTEWLKF</sequence>
<gene>
    <name type="ordered locus">SE_1114</name>
</gene>